<proteinExistence type="inferred from homology"/>
<sequence length="435" mass="48883">MFIDRAKIYVKAGDGGNGCVAFRREKFVPRGGPAGGDGGKGGDVIIEADENLDTLLDFHYKRHYYAERGEHGKGKNQKGKDGEDLIIKVPTGTLIFDAETGELIADLVSHGQRVVVARGGKGGRGNTHFATSTRQAPYFAEKGEKGEERWLYLELKLLADVGLVGLPNAGKSTLLSKISNANPEIAPYPFTTKTPNLGVVEREDITFTVADIPGLIEGAHENKGMGDEFLRHIERTLVLVFVIDAADLVTPPQKAYEILKKELYLYSPKLLEKPRIIAINKIDLPEAQERLPEIEKWLKNEGVPYVFISAKEGINIDKLLELMEKYVRERKESIPVVEVDKEIQETKEGRVETEEIPEVIREKDLWILKDKKTESLANKLDLYNPQAFSYFSNYIKRRGIIKLINRAKVKDGEKIKIGDYIFKYNAKTNSLEILE</sequence>
<evidence type="ECO:0000255" key="1">
    <source>
        <dbReference type="HAMAP-Rule" id="MF_01454"/>
    </source>
</evidence>
<evidence type="ECO:0000255" key="2">
    <source>
        <dbReference type="PROSITE-ProRule" id="PRU01229"/>
    </source>
</evidence>
<evidence type="ECO:0000255" key="3">
    <source>
        <dbReference type="PROSITE-ProRule" id="PRU01231"/>
    </source>
</evidence>
<protein>
    <recommendedName>
        <fullName evidence="1">GTPase Obg</fullName>
        <ecNumber evidence="1">3.6.5.-</ecNumber>
    </recommendedName>
    <alternativeName>
        <fullName evidence="1">GTP-binding protein Obg</fullName>
    </alternativeName>
</protein>
<name>OBG_DICT6</name>
<gene>
    <name evidence="1" type="primary">obg</name>
    <name type="ordered locus">DICTH_1175</name>
</gene>
<accession>B5YEQ1</accession>
<organism>
    <name type="scientific">Dictyoglomus thermophilum (strain ATCC 35947 / DSM 3960 / H-6-12)</name>
    <dbReference type="NCBI Taxonomy" id="309799"/>
    <lineage>
        <taxon>Bacteria</taxon>
        <taxon>Pseudomonadati</taxon>
        <taxon>Dictyoglomota</taxon>
        <taxon>Dictyoglomia</taxon>
        <taxon>Dictyoglomales</taxon>
        <taxon>Dictyoglomaceae</taxon>
        <taxon>Dictyoglomus</taxon>
    </lineage>
</organism>
<feature type="chain" id="PRO_0000385896" description="GTPase Obg">
    <location>
        <begin position="1"/>
        <end position="435"/>
    </location>
</feature>
<feature type="domain" description="Obg" evidence="3">
    <location>
        <begin position="1"/>
        <end position="158"/>
    </location>
</feature>
<feature type="domain" description="OBG-type G" evidence="1">
    <location>
        <begin position="159"/>
        <end position="328"/>
    </location>
</feature>
<feature type="domain" description="OCT" evidence="2">
    <location>
        <begin position="343"/>
        <end position="426"/>
    </location>
</feature>
<feature type="binding site" evidence="1">
    <location>
        <begin position="165"/>
        <end position="172"/>
    </location>
    <ligand>
        <name>GTP</name>
        <dbReference type="ChEBI" id="CHEBI:37565"/>
    </ligand>
</feature>
<feature type="binding site" evidence="1">
    <location>
        <position position="172"/>
    </location>
    <ligand>
        <name>Mg(2+)</name>
        <dbReference type="ChEBI" id="CHEBI:18420"/>
    </ligand>
</feature>
<feature type="binding site" evidence="1">
    <location>
        <begin position="190"/>
        <end position="194"/>
    </location>
    <ligand>
        <name>GTP</name>
        <dbReference type="ChEBI" id="CHEBI:37565"/>
    </ligand>
</feature>
<feature type="binding site" evidence="1">
    <location>
        <position position="192"/>
    </location>
    <ligand>
        <name>Mg(2+)</name>
        <dbReference type="ChEBI" id="CHEBI:18420"/>
    </ligand>
</feature>
<feature type="binding site" evidence="1">
    <location>
        <begin position="211"/>
        <end position="214"/>
    </location>
    <ligand>
        <name>GTP</name>
        <dbReference type="ChEBI" id="CHEBI:37565"/>
    </ligand>
</feature>
<feature type="binding site" evidence="1">
    <location>
        <begin position="280"/>
        <end position="283"/>
    </location>
    <ligand>
        <name>GTP</name>
        <dbReference type="ChEBI" id="CHEBI:37565"/>
    </ligand>
</feature>
<feature type="binding site" evidence="1">
    <location>
        <begin position="309"/>
        <end position="311"/>
    </location>
    <ligand>
        <name>GTP</name>
        <dbReference type="ChEBI" id="CHEBI:37565"/>
    </ligand>
</feature>
<keyword id="KW-0963">Cytoplasm</keyword>
<keyword id="KW-0342">GTP-binding</keyword>
<keyword id="KW-0378">Hydrolase</keyword>
<keyword id="KW-0460">Magnesium</keyword>
<keyword id="KW-0479">Metal-binding</keyword>
<keyword id="KW-0547">Nucleotide-binding</keyword>
<reference key="1">
    <citation type="journal article" date="2014" name="Genome Announc.">
        <title>Complete Genome Sequence of the Extreme Thermophile Dictyoglomus thermophilum H-6-12.</title>
        <authorList>
            <person name="Coil D.A."/>
            <person name="Badger J.H."/>
            <person name="Forberger H.C."/>
            <person name="Riggs F."/>
            <person name="Madupu R."/>
            <person name="Fedorova N."/>
            <person name="Ward N."/>
            <person name="Robb F.T."/>
            <person name="Eisen J.A."/>
        </authorList>
    </citation>
    <scope>NUCLEOTIDE SEQUENCE [LARGE SCALE GENOMIC DNA]</scope>
    <source>
        <strain>ATCC 35947 / DSM 3960 / H-6-12</strain>
    </source>
</reference>
<dbReference type="EC" id="3.6.5.-" evidence="1"/>
<dbReference type="EMBL" id="CP001146">
    <property type="protein sequence ID" value="ACI18393.1"/>
    <property type="molecule type" value="Genomic_DNA"/>
</dbReference>
<dbReference type="RefSeq" id="WP_012547025.1">
    <property type="nucleotide sequence ID" value="NC_011297.1"/>
</dbReference>
<dbReference type="SMR" id="B5YEQ1"/>
<dbReference type="STRING" id="309799.DICTH_1175"/>
<dbReference type="PaxDb" id="309799-DICTH_1175"/>
<dbReference type="KEGG" id="dth:DICTH_1175"/>
<dbReference type="eggNOG" id="COG0536">
    <property type="taxonomic scope" value="Bacteria"/>
</dbReference>
<dbReference type="HOGENOM" id="CLU_011747_2_1_0"/>
<dbReference type="OrthoDB" id="9807318at2"/>
<dbReference type="Proteomes" id="UP000001733">
    <property type="component" value="Chromosome"/>
</dbReference>
<dbReference type="GO" id="GO:0005737">
    <property type="term" value="C:cytoplasm"/>
    <property type="evidence" value="ECO:0007669"/>
    <property type="project" value="UniProtKB-SubCell"/>
</dbReference>
<dbReference type="GO" id="GO:0005525">
    <property type="term" value="F:GTP binding"/>
    <property type="evidence" value="ECO:0007669"/>
    <property type="project" value="UniProtKB-UniRule"/>
</dbReference>
<dbReference type="GO" id="GO:0003924">
    <property type="term" value="F:GTPase activity"/>
    <property type="evidence" value="ECO:0007669"/>
    <property type="project" value="UniProtKB-UniRule"/>
</dbReference>
<dbReference type="GO" id="GO:0000287">
    <property type="term" value="F:magnesium ion binding"/>
    <property type="evidence" value="ECO:0007669"/>
    <property type="project" value="InterPro"/>
</dbReference>
<dbReference type="GO" id="GO:0042254">
    <property type="term" value="P:ribosome biogenesis"/>
    <property type="evidence" value="ECO:0007669"/>
    <property type="project" value="UniProtKB-UniRule"/>
</dbReference>
<dbReference type="CDD" id="cd01898">
    <property type="entry name" value="Obg"/>
    <property type="match status" value="1"/>
</dbReference>
<dbReference type="FunFam" id="2.70.210.12:FF:000001">
    <property type="entry name" value="GTPase Obg"/>
    <property type="match status" value="1"/>
</dbReference>
<dbReference type="Gene3D" id="3.30.300.350">
    <property type="entry name" value="GTP-binding protein OBG, C-terminal domain"/>
    <property type="match status" value="1"/>
</dbReference>
<dbReference type="Gene3D" id="2.70.210.12">
    <property type="entry name" value="GTP1/OBG domain"/>
    <property type="match status" value="1"/>
</dbReference>
<dbReference type="Gene3D" id="3.40.50.300">
    <property type="entry name" value="P-loop containing nucleotide triphosphate hydrolases"/>
    <property type="match status" value="1"/>
</dbReference>
<dbReference type="HAMAP" id="MF_01454">
    <property type="entry name" value="GTPase_Obg"/>
    <property type="match status" value="1"/>
</dbReference>
<dbReference type="InterPro" id="IPR031167">
    <property type="entry name" value="G_OBG"/>
</dbReference>
<dbReference type="InterPro" id="IPR006073">
    <property type="entry name" value="GTP-bd"/>
</dbReference>
<dbReference type="InterPro" id="IPR014100">
    <property type="entry name" value="GTP-bd_Obg/CgtA"/>
</dbReference>
<dbReference type="InterPro" id="IPR036346">
    <property type="entry name" value="GTP-bd_prot_GTP1/OBG_C_sf"/>
</dbReference>
<dbReference type="InterPro" id="IPR006169">
    <property type="entry name" value="GTP1_OBG_dom"/>
</dbReference>
<dbReference type="InterPro" id="IPR036726">
    <property type="entry name" value="GTP1_OBG_dom_sf"/>
</dbReference>
<dbReference type="InterPro" id="IPR045086">
    <property type="entry name" value="OBG_GTPase"/>
</dbReference>
<dbReference type="InterPro" id="IPR015349">
    <property type="entry name" value="OCT_dom"/>
</dbReference>
<dbReference type="InterPro" id="IPR027417">
    <property type="entry name" value="P-loop_NTPase"/>
</dbReference>
<dbReference type="InterPro" id="IPR005225">
    <property type="entry name" value="Small_GTP-bd"/>
</dbReference>
<dbReference type="NCBIfam" id="TIGR02729">
    <property type="entry name" value="Obg_CgtA"/>
    <property type="match status" value="1"/>
</dbReference>
<dbReference type="NCBIfam" id="TIGR03595">
    <property type="entry name" value="Obg_CgtA_exten"/>
    <property type="match status" value="1"/>
</dbReference>
<dbReference type="NCBIfam" id="NF008954">
    <property type="entry name" value="PRK12296.1"/>
    <property type="match status" value="1"/>
</dbReference>
<dbReference type="NCBIfam" id="NF008955">
    <property type="entry name" value="PRK12297.1"/>
    <property type="match status" value="1"/>
</dbReference>
<dbReference type="NCBIfam" id="NF008956">
    <property type="entry name" value="PRK12299.1"/>
    <property type="match status" value="1"/>
</dbReference>
<dbReference type="NCBIfam" id="TIGR00231">
    <property type="entry name" value="small_GTP"/>
    <property type="match status" value="1"/>
</dbReference>
<dbReference type="PANTHER" id="PTHR11702">
    <property type="entry name" value="DEVELOPMENTALLY REGULATED GTP-BINDING PROTEIN-RELATED"/>
    <property type="match status" value="1"/>
</dbReference>
<dbReference type="PANTHER" id="PTHR11702:SF31">
    <property type="entry name" value="MITOCHONDRIAL RIBOSOME-ASSOCIATED GTPASE 2"/>
    <property type="match status" value="1"/>
</dbReference>
<dbReference type="Pfam" id="PF09269">
    <property type="entry name" value="DUF1967"/>
    <property type="match status" value="1"/>
</dbReference>
<dbReference type="Pfam" id="PF01018">
    <property type="entry name" value="GTP1_OBG"/>
    <property type="match status" value="1"/>
</dbReference>
<dbReference type="Pfam" id="PF01926">
    <property type="entry name" value="MMR_HSR1"/>
    <property type="match status" value="1"/>
</dbReference>
<dbReference type="PIRSF" id="PIRSF002401">
    <property type="entry name" value="GTP_bd_Obg/CgtA"/>
    <property type="match status" value="1"/>
</dbReference>
<dbReference type="PRINTS" id="PR00326">
    <property type="entry name" value="GTP1OBG"/>
</dbReference>
<dbReference type="SUPFAM" id="SSF102741">
    <property type="entry name" value="Obg GTP-binding protein C-terminal domain"/>
    <property type="match status" value="1"/>
</dbReference>
<dbReference type="SUPFAM" id="SSF82051">
    <property type="entry name" value="Obg GTP-binding protein N-terminal domain"/>
    <property type="match status" value="1"/>
</dbReference>
<dbReference type="SUPFAM" id="SSF52540">
    <property type="entry name" value="P-loop containing nucleoside triphosphate hydrolases"/>
    <property type="match status" value="1"/>
</dbReference>
<dbReference type="PROSITE" id="PS51710">
    <property type="entry name" value="G_OBG"/>
    <property type="match status" value="1"/>
</dbReference>
<dbReference type="PROSITE" id="PS51883">
    <property type="entry name" value="OBG"/>
    <property type="match status" value="1"/>
</dbReference>
<dbReference type="PROSITE" id="PS51881">
    <property type="entry name" value="OCT"/>
    <property type="match status" value="1"/>
</dbReference>
<comment type="function">
    <text evidence="1">An essential GTPase which binds GTP, GDP and possibly (p)ppGpp with moderate affinity, with high nucleotide exchange rates and a fairly low GTP hydrolysis rate. Plays a role in control of the cell cycle, stress response, ribosome biogenesis and in those bacteria that undergo differentiation, in morphogenesis control.</text>
</comment>
<comment type="cofactor">
    <cofactor evidence="1">
        <name>Mg(2+)</name>
        <dbReference type="ChEBI" id="CHEBI:18420"/>
    </cofactor>
</comment>
<comment type="subunit">
    <text evidence="1">Monomer.</text>
</comment>
<comment type="subcellular location">
    <subcellularLocation>
        <location evidence="1">Cytoplasm</location>
    </subcellularLocation>
</comment>
<comment type="similarity">
    <text evidence="1">Belongs to the TRAFAC class OBG-HflX-like GTPase superfamily. OBG GTPase family.</text>
</comment>